<name>GPDA_LEPBL</name>
<reference key="1">
    <citation type="journal article" date="2006" name="Proc. Natl. Acad. Sci. U.S.A.">
        <title>Genome reduction in Leptospira borgpetersenii reflects limited transmission potential.</title>
        <authorList>
            <person name="Bulach D.M."/>
            <person name="Zuerner R.L."/>
            <person name="Wilson P."/>
            <person name="Seemann T."/>
            <person name="McGrath A."/>
            <person name="Cullen P.A."/>
            <person name="Davis J."/>
            <person name="Johnson M."/>
            <person name="Kuczek E."/>
            <person name="Alt D.P."/>
            <person name="Peterson-Burch B."/>
            <person name="Coppel R.L."/>
            <person name="Rood J.I."/>
            <person name="Davies J.K."/>
            <person name="Adler B."/>
        </authorList>
    </citation>
    <scope>NUCLEOTIDE SEQUENCE [LARGE SCALE GENOMIC DNA]</scope>
    <source>
        <strain>L550</strain>
    </source>
</reference>
<protein>
    <recommendedName>
        <fullName evidence="1">Glycerol-3-phosphate dehydrogenase [NAD(P)+]</fullName>
        <ecNumber evidence="1">1.1.1.94</ecNumber>
    </recommendedName>
    <alternativeName>
        <fullName evidence="1">NAD(P)(+)-dependent glycerol-3-phosphate dehydrogenase</fullName>
    </alternativeName>
    <alternativeName>
        <fullName evidence="1">NAD(P)H-dependent dihydroxyacetone-phosphate reductase</fullName>
    </alternativeName>
</protein>
<comment type="function">
    <text evidence="1">Catalyzes the reduction of the glycolytic intermediate dihydroxyacetone phosphate (DHAP) to sn-glycerol 3-phosphate (G3P), the key precursor for phospholipid synthesis.</text>
</comment>
<comment type="catalytic activity">
    <reaction evidence="1">
        <text>sn-glycerol 3-phosphate + NAD(+) = dihydroxyacetone phosphate + NADH + H(+)</text>
        <dbReference type="Rhea" id="RHEA:11092"/>
        <dbReference type="ChEBI" id="CHEBI:15378"/>
        <dbReference type="ChEBI" id="CHEBI:57540"/>
        <dbReference type="ChEBI" id="CHEBI:57597"/>
        <dbReference type="ChEBI" id="CHEBI:57642"/>
        <dbReference type="ChEBI" id="CHEBI:57945"/>
        <dbReference type="EC" id="1.1.1.94"/>
    </reaction>
    <physiologicalReaction direction="right-to-left" evidence="1">
        <dbReference type="Rhea" id="RHEA:11094"/>
    </physiologicalReaction>
</comment>
<comment type="catalytic activity">
    <reaction evidence="1">
        <text>sn-glycerol 3-phosphate + NADP(+) = dihydroxyacetone phosphate + NADPH + H(+)</text>
        <dbReference type="Rhea" id="RHEA:11096"/>
        <dbReference type="ChEBI" id="CHEBI:15378"/>
        <dbReference type="ChEBI" id="CHEBI:57597"/>
        <dbReference type="ChEBI" id="CHEBI:57642"/>
        <dbReference type="ChEBI" id="CHEBI:57783"/>
        <dbReference type="ChEBI" id="CHEBI:58349"/>
        <dbReference type="EC" id="1.1.1.94"/>
    </reaction>
    <physiologicalReaction direction="right-to-left" evidence="1">
        <dbReference type="Rhea" id="RHEA:11098"/>
    </physiologicalReaction>
</comment>
<comment type="pathway">
    <text evidence="1">Membrane lipid metabolism; glycerophospholipid metabolism.</text>
</comment>
<comment type="subcellular location">
    <subcellularLocation>
        <location evidence="1">Cytoplasm</location>
    </subcellularLocation>
</comment>
<comment type="similarity">
    <text evidence="1">Belongs to the NAD-dependent glycerol-3-phosphate dehydrogenase family.</text>
</comment>
<sequence>MKIGVIGSGSFGTALGSLLADKGYEVTLWCRNDSQIESINRNHINNKHLPDFTLPEKLTASKDLRTVVQGKDMIVSSPPSHALTEILREIKEYLPEKVPIVSASKGIENGTLRLVSEIFESELPGKYHSYLSYLSGPSFAKEIIQKVPTIVSIASRSETTARKVQEIFSFLYFRTYWTPDVIGVEVGGSLKNVIALAAGVSDGLGFGQNTRAALITRGLNEITKIGLKLGADPMTFLGPSGMGDLILTCCGGQSRNRTVGFRLGKGETLEQILSGMNEVAEGIKTTQSAYELSQKLGIEMAITNEVYKMLYEDKNPKEVVKDLMKRDLKREGVLV</sequence>
<dbReference type="EC" id="1.1.1.94" evidence="1"/>
<dbReference type="EMBL" id="CP000348">
    <property type="protein sequence ID" value="ABJ80030.1"/>
    <property type="molecule type" value="Genomic_DNA"/>
</dbReference>
<dbReference type="RefSeq" id="WP_011670971.1">
    <property type="nucleotide sequence ID" value="NC_008508.1"/>
</dbReference>
<dbReference type="SMR" id="Q04Y15"/>
<dbReference type="KEGG" id="lbl:LBL_2682"/>
<dbReference type="HOGENOM" id="CLU_033449_0_2_12"/>
<dbReference type="UniPathway" id="UPA00940"/>
<dbReference type="GO" id="GO:0005829">
    <property type="term" value="C:cytosol"/>
    <property type="evidence" value="ECO:0007669"/>
    <property type="project" value="TreeGrafter"/>
</dbReference>
<dbReference type="GO" id="GO:0047952">
    <property type="term" value="F:glycerol-3-phosphate dehydrogenase [NAD(P)+] activity"/>
    <property type="evidence" value="ECO:0007669"/>
    <property type="project" value="UniProtKB-UniRule"/>
</dbReference>
<dbReference type="GO" id="GO:0051287">
    <property type="term" value="F:NAD binding"/>
    <property type="evidence" value="ECO:0007669"/>
    <property type="project" value="InterPro"/>
</dbReference>
<dbReference type="GO" id="GO:0005975">
    <property type="term" value="P:carbohydrate metabolic process"/>
    <property type="evidence" value="ECO:0007669"/>
    <property type="project" value="InterPro"/>
</dbReference>
<dbReference type="GO" id="GO:0046167">
    <property type="term" value="P:glycerol-3-phosphate biosynthetic process"/>
    <property type="evidence" value="ECO:0007669"/>
    <property type="project" value="UniProtKB-UniRule"/>
</dbReference>
<dbReference type="GO" id="GO:0046168">
    <property type="term" value="P:glycerol-3-phosphate catabolic process"/>
    <property type="evidence" value="ECO:0007669"/>
    <property type="project" value="InterPro"/>
</dbReference>
<dbReference type="GO" id="GO:0006650">
    <property type="term" value="P:glycerophospholipid metabolic process"/>
    <property type="evidence" value="ECO:0007669"/>
    <property type="project" value="UniProtKB-UniRule"/>
</dbReference>
<dbReference type="GO" id="GO:0008654">
    <property type="term" value="P:phospholipid biosynthetic process"/>
    <property type="evidence" value="ECO:0007669"/>
    <property type="project" value="UniProtKB-KW"/>
</dbReference>
<dbReference type="FunFam" id="1.10.1040.10:FF:000001">
    <property type="entry name" value="Glycerol-3-phosphate dehydrogenase [NAD(P)+]"/>
    <property type="match status" value="1"/>
</dbReference>
<dbReference type="FunFam" id="3.40.50.720:FF:000019">
    <property type="entry name" value="Glycerol-3-phosphate dehydrogenase [NAD(P)+]"/>
    <property type="match status" value="1"/>
</dbReference>
<dbReference type="Gene3D" id="1.10.1040.10">
    <property type="entry name" value="N-(1-d-carboxylethyl)-l-norvaline Dehydrogenase, domain 2"/>
    <property type="match status" value="1"/>
</dbReference>
<dbReference type="Gene3D" id="3.40.50.720">
    <property type="entry name" value="NAD(P)-binding Rossmann-like Domain"/>
    <property type="match status" value="1"/>
</dbReference>
<dbReference type="HAMAP" id="MF_00394">
    <property type="entry name" value="NAD_Glyc3P_dehydrog"/>
    <property type="match status" value="1"/>
</dbReference>
<dbReference type="InterPro" id="IPR008927">
    <property type="entry name" value="6-PGluconate_DH-like_C_sf"/>
</dbReference>
<dbReference type="InterPro" id="IPR013328">
    <property type="entry name" value="6PGD_dom2"/>
</dbReference>
<dbReference type="InterPro" id="IPR006168">
    <property type="entry name" value="G3P_DH_NAD-dep"/>
</dbReference>
<dbReference type="InterPro" id="IPR006109">
    <property type="entry name" value="G3P_DH_NAD-dep_C"/>
</dbReference>
<dbReference type="InterPro" id="IPR011128">
    <property type="entry name" value="G3P_DH_NAD-dep_N"/>
</dbReference>
<dbReference type="InterPro" id="IPR036291">
    <property type="entry name" value="NAD(P)-bd_dom_sf"/>
</dbReference>
<dbReference type="NCBIfam" id="NF000940">
    <property type="entry name" value="PRK00094.1-2"/>
    <property type="match status" value="1"/>
</dbReference>
<dbReference type="NCBIfam" id="NF000942">
    <property type="entry name" value="PRK00094.1-4"/>
    <property type="match status" value="1"/>
</dbReference>
<dbReference type="PANTHER" id="PTHR11728">
    <property type="entry name" value="GLYCEROL-3-PHOSPHATE DEHYDROGENASE"/>
    <property type="match status" value="1"/>
</dbReference>
<dbReference type="PANTHER" id="PTHR11728:SF1">
    <property type="entry name" value="GLYCEROL-3-PHOSPHATE DEHYDROGENASE [NAD(+)] 2, CHLOROPLASTIC"/>
    <property type="match status" value="1"/>
</dbReference>
<dbReference type="Pfam" id="PF07479">
    <property type="entry name" value="NAD_Gly3P_dh_C"/>
    <property type="match status" value="1"/>
</dbReference>
<dbReference type="Pfam" id="PF01210">
    <property type="entry name" value="NAD_Gly3P_dh_N"/>
    <property type="match status" value="1"/>
</dbReference>
<dbReference type="PIRSF" id="PIRSF000114">
    <property type="entry name" value="Glycerol-3-P_dh"/>
    <property type="match status" value="1"/>
</dbReference>
<dbReference type="PRINTS" id="PR00077">
    <property type="entry name" value="GPDHDRGNASE"/>
</dbReference>
<dbReference type="SUPFAM" id="SSF48179">
    <property type="entry name" value="6-phosphogluconate dehydrogenase C-terminal domain-like"/>
    <property type="match status" value="1"/>
</dbReference>
<dbReference type="SUPFAM" id="SSF51735">
    <property type="entry name" value="NAD(P)-binding Rossmann-fold domains"/>
    <property type="match status" value="1"/>
</dbReference>
<dbReference type="PROSITE" id="PS00957">
    <property type="entry name" value="NAD_G3PDH"/>
    <property type="match status" value="1"/>
</dbReference>
<gene>
    <name evidence="1" type="primary">gpsA</name>
    <name type="ordered locus">LBL_2682</name>
</gene>
<proteinExistence type="inferred from homology"/>
<organism>
    <name type="scientific">Leptospira borgpetersenii serovar Hardjo-bovis (strain L550)</name>
    <dbReference type="NCBI Taxonomy" id="355276"/>
    <lineage>
        <taxon>Bacteria</taxon>
        <taxon>Pseudomonadati</taxon>
        <taxon>Spirochaetota</taxon>
        <taxon>Spirochaetia</taxon>
        <taxon>Leptospirales</taxon>
        <taxon>Leptospiraceae</taxon>
        <taxon>Leptospira</taxon>
    </lineage>
</organism>
<feature type="chain" id="PRO_1000049522" description="Glycerol-3-phosphate dehydrogenase [NAD(P)+]">
    <location>
        <begin position="1"/>
        <end position="335"/>
    </location>
</feature>
<feature type="active site" description="Proton acceptor" evidence="1">
    <location>
        <position position="191"/>
    </location>
</feature>
<feature type="binding site" evidence="1">
    <location>
        <position position="10"/>
    </location>
    <ligand>
        <name>NADPH</name>
        <dbReference type="ChEBI" id="CHEBI:57783"/>
    </ligand>
</feature>
<feature type="binding site" evidence="1">
    <location>
        <position position="11"/>
    </location>
    <ligand>
        <name>NADPH</name>
        <dbReference type="ChEBI" id="CHEBI:57783"/>
    </ligand>
</feature>
<feature type="binding site" evidence="1">
    <location>
        <position position="31"/>
    </location>
    <ligand>
        <name>NADPH</name>
        <dbReference type="ChEBI" id="CHEBI:57783"/>
    </ligand>
</feature>
<feature type="binding site" evidence="1">
    <location>
        <position position="105"/>
    </location>
    <ligand>
        <name>NADPH</name>
        <dbReference type="ChEBI" id="CHEBI:57783"/>
    </ligand>
</feature>
<feature type="binding site" evidence="1">
    <location>
        <position position="105"/>
    </location>
    <ligand>
        <name>sn-glycerol 3-phosphate</name>
        <dbReference type="ChEBI" id="CHEBI:57597"/>
    </ligand>
</feature>
<feature type="binding site" evidence="1">
    <location>
        <position position="136"/>
    </location>
    <ligand>
        <name>sn-glycerol 3-phosphate</name>
        <dbReference type="ChEBI" id="CHEBI:57597"/>
    </ligand>
</feature>
<feature type="binding site" evidence="1">
    <location>
        <position position="138"/>
    </location>
    <ligand>
        <name>sn-glycerol 3-phosphate</name>
        <dbReference type="ChEBI" id="CHEBI:57597"/>
    </ligand>
</feature>
<feature type="binding site" evidence="1">
    <location>
        <position position="140"/>
    </location>
    <ligand>
        <name>NADPH</name>
        <dbReference type="ChEBI" id="CHEBI:57783"/>
    </ligand>
</feature>
<feature type="binding site" evidence="1">
    <location>
        <position position="191"/>
    </location>
    <ligand>
        <name>sn-glycerol 3-phosphate</name>
        <dbReference type="ChEBI" id="CHEBI:57597"/>
    </ligand>
</feature>
<feature type="binding site" evidence="1">
    <location>
        <position position="244"/>
    </location>
    <ligand>
        <name>sn-glycerol 3-phosphate</name>
        <dbReference type="ChEBI" id="CHEBI:57597"/>
    </ligand>
</feature>
<feature type="binding site" evidence="1">
    <location>
        <position position="254"/>
    </location>
    <ligand>
        <name>sn-glycerol 3-phosphate</name>
        <dbReference type="ChEBI" id="CHEBI:57597"/>
    </ligand>
</feature>
<feature type="binding site" evidence="1">
    <location>
        <position position="255"/>
    </location>
    <ligand>
        <name>NADPH</name>
        <dbReference type="ChEBI" id="CHEBI:57783"/>
    </ligand>
</feature>
<feature type="binding site" evidence="1">
    <location>
        <position position="255"/>
    </location>
    <ligand>
        <name>sn-glycerol 3-phosphate</name>
        <dbReference type="ChEBI" id="CHEBI:57597"/>
    </ligand>
</feature>
<feature type="binding site" evidence="1">
    <location>
        <position position="256"/>
    </location>
    <ligand>
        <name>sn-glycerol 3-phosphate</name>
        <dbReference type="ChEBI" id="CHEBI:57597"/>
    </ligand>
</feature>
<feature type="binding site" evidence="1">
    <location>
        <position position="279"/>
    </location>
    <ligand>
        <name>NADPH</name>
        <dbReference type="ChEBI" id="CHEBI:57783"/>
    </ligand>
</feature>
<feature type="binding site" evidence="1">
    <location>
        <position position="281"/>
    </location>
    <ligand>
        <name>NADPH</name>
        <dbReference type="ChEBI" id="CHEBI:57783"/>
    </ligand>
</feature>
<evidence type="ECO:0000255" key="1">
    <source>
        <dbReference type="HAMAP-Rule" id="MF_00394"/>
    </source>
</evidence>
<keyword id="KW-0963">Cytoplasm</keyword>
<keyword id="KW-0444">Lipid biosynthesis</keyword>
<keyword id="KW-0443">Lipid metabolism</keyword>
<keyword id="KW-0520">NAD</keyword>
<keyword id="KW-0521">NADP</keyword>
<keyword id="KW-0547">Nucleotide-binding</keyword>
<keyword id="KW-0560">Oxidoreductase</keyword>
<keyword id="KW-0594">Phospholipid biosynthesis</keyword>
<keyword id="KW-1208">Phospholipid metabolism</keyword>
<accession>Q04Y15</accession>